<sequence length="151" mass="17195">MRHGVSGRKLNRATSHRLAMFRNMVTSLLQHERIFTTLPKAKELRRWADWMISLGKRGDLHARRQVMACVREKETVQKIFAELGPRYQSRPGGYTRIVKAGYRRGDASPMCLIELITEAKQPPRKEKAKKPAPVQAEEASATPASEEKAQD</sequence>
<comment type="subunit">
    <text evidence="1">Part of the 50S ribosomal subunit. Contacts protein L32.</text>
</comment>
<comment type="similarity">
    <text evidence="1">Belongs to the bacterial ribosomal protein bL17 family.</text>
</comment>
<keyword id="KW-1185">Reference proteome</keyword>
<keyword id="KW-0687">Ribonucleoprotein</keyword>
<keyword id="KW-0689">Ribosomal protein</keyword>
<organism>
    <name type="scientific">Syntrophobacter fumaroxidans (strain DSM 10017 / MPOB)</name>
    <dbReference type="NCBI Taxonomy" id="335543"/>
    <lineage>
        <taxon>Bacteria</taxon>
        <taxon>Pseudomonadati</taxon>
        <taxon>Thermodesulfobacteriota</taxon>
        <taxon>Syntrophobacteria</taxon>
        <taxon>Syntrophobacterales</taxon>
        <taxon>Syntrophobacteraceae</taxon>
        <taxon>Syntrophobacter</taxon>
    </lineage>
</organism>
<reference key="1">
    <citation type="submission" date="2006-10" db="EMBL/GenBank/DDBJ databases">
        <title>Complete sequence of Syntrophobacter fumaroxidans MPOB.</title>
        <authorList>
            <consortium name="US DOE Joint Genome Institute"/>
            <person name="Copeland A."/>
            <person name="Lucas S."/>
            <person name="Lapidus A."/>
            <person name="Barry K."/>
            <person name="Detter J.C."/>
            <person name="Glavina del Rio T."/>
            <person name="Hammon N."/>
            <person name="Israni S."/>
            <person name="Pitluck S."/>
            <person name="Goltsman E.G."/>
            <person name="Martinez M."/>
            <person name="Schmutz J."/>
            <person name="Larimer F."/>
            <person name="Land M."/>
            <person name="Hauser L."/>
            <person name="Kyrpides N."/>
            <person name="Kim E."/>
            <person name="Boone D.R."/>
            <person name="Brockman F."/>
            <person name="Culley D."/>
            <person name="Ferry J."/>
            <person name="Gunsalus R."/>
            <person name="McInerney M.J."/>
            <person name="Morrison M."/>
            <person name="Plugge C."/>
            <person name="Rohlin L."/>
            <person name="Scholten J."/>
            <person name="Sieber J."/>
            <person name="Stams A.J.M."/>
            <person name="Worm P."/>
            <person name="Henstra A.M."/>
            <person name="Richardson P."/>
        </authorList>
    </citation>
    <scope>NUCLEOTIDE SEQUENCE [LARGE SCALE GENOMIC DNA]</scope>
    <source>
        <strain>DSM 10017 / MPOB</strain>
    </source>
</reference>
<proteinExistence type="inferred from homology"/>
<gene>
    <name evidence="1" type="primary">rplQ</name>
    <name type="ordered locus">Sfum_1583</name>
</gene>
<evidence type="ECO:0000255" key="1">
    <source>
        <dbReference type="HAMAP-Rule" id="MF_01368"/>
    </source>
</evidence>
<evidence type="ECO:0000256" key="2">
    <source>
        <dbReference type="SAM" id="MobiDB-lite"/>
    </source>
</evidence>
<evidence type="ECO:0000305" key="3"/>
<accession>A0LIL8</accession>
<feature type="chain" id="PRO_1000068030" description="Large ribosomal subunit protein bL17">
    <location>
        <begin position="1"/>
        <end position="151"/>
    </location>
</feature>
<feature type="region of interest" description="Disordered" evidence="2">
    <location>
        <begin position="118"/>
        <end position="151"/>
    </location>
</feature>
<feature type="compositionally biased region" description="Low complexity" evidence="2">
    <location>
        <begin position="131"/>
        <end position="144"/>
    </location>
</feature>
<protein>
    <recommendedName>
        <fullName evidence="1">Large ribosomal subunit protein bL17</fullName>
    </recommendedName>
    <alternativeName>
        <fullName evidence="3">50S ribosomal protein L17</fullName>
    </alternativeName>
</protein>
<name>RL17_SYNFM</name>
<dbReference type="EMBL" id="CP000478">
    <property type="protein sequence ID" value="ABK17270.1"/>
    <property type="molecule type" value="Genomic_DNA"/>
</dbReference>
<dbReference type="RefSeq" id="WP_011698440.1">
    <property type="nucleotide sequence ID" value="NC_008554.1"/>
</dbReference>
<dbReference type="SMR" id="A0LIL8"/>
<dbReference type="FunCoup" id="A0LIL8">
    <property type="interactions" value="662"/>
</dbReference>
<dbReference type="STRING" id="335543.Sfum_1583"/>
<dbReference type="KEGG" id="sfu:Sfum_1583"/>
<dbReference type="eggNOG" id="COG0203">
    <property type="taxonomic scope" value="Bacteria"/>
</dbReference>
<dbReference type="HOGENOM" id="CLU_074407_0_1_7"/>
<dbReference type="InParanoid" id="A0LIL8"/>
<dbReference type="OrthoDB" id="9809073at2"/>
<dbReference type="Proteomes" id="UP000001784">
    <property type="component" value="Chromosome"/>
</dbReference>
<dbReference type="GO" id="GO:0022625">
    <property type="term" value="C:cytosolic large ribosomal subunit"/>
    <property type="evidence" value="ECO:0007669"/>
    <property type="project" value="TreeGrafter"/>
</dbReference>
<dbReference type="GO" id="GO:0003735">
    <property type="term" value="F:structural constituent of ribosome"/>
    <property type="evidence" value="ECO:0007669"/>
    <property type="project" value="InterPro"/>
</dbReference>
<dbReference type="GO" id="GO:0006412">
    <property type="term" value="P:translation"/>
    <property type="evidence" value="ECO:0007669"/>
    <property type="project" value="UniProtKB-UniRule"/>
</dbReference>
<dbReference type="FunFam" id="3.90.1030.10:FF:000001">
    <property type="entry name" value="50S ribosomal protein L17"/>
    <property type="match status" value="1"/>
</dbReference>
<dbReference type="Gene3D" id="3.90.1030.10">
    <property type="entry name" value="Ribosomal protein L17"/>
    <property type="match status" value="1"/>
</dbReference>
<dbReference type="HAMAP" id="MF_01368">
    <property type="entry name" value="Ribosomal_bL17"/>
    <property type="match status" value="1"/>
</dbReference>
<dbReference type="InterPro" id="IPR000456">
    <property type="entry name" value="Ribosomal_bL17"/>
</dbReference>
<dbReference type="InterPro" id="IPR036373">
    <property type="entry name" value="Ribosomal_bL17_sf"/>
</dbReference>
<dbReference type="NCBIfam" id="TIGR00059">
    <property type="entry name" value="L17"/>
    <property type="match status" value="1"/>
</dbReference>
<dbReference type="PANTHER" id="PTHR14413:SF16">
    <property type="entry name" value="LARGE RIBOSOMAL SUBUNIT PROTEIN BL17M"/>
    <property type="match status" value="1"/>
</dbReference>
<dbReference type="PANTHER" id="PTHR14413">
    <property type="entry name" value="RIBOSOMAL PROTEIN L17"/>
    <property type="match status" value="1"/>
</dbReference>
<dbReference type="Pfam" id="PF01196">
    <property type="entry name" value="Ribosomal_L17"/>
    <property type="match status" value="1"/>
</dbReference>
<dbReference type="SUPFAM" id="SSF64263">
    <property type="entry name" value="Prokaryotic ribosomal protein L17"/>
    <property type="match status" value="1"/>
</dbReference>